<sequence length="639" mass="73315">MKKLFSYKLSFFVLAVILFWAKTYLSYKTEFNLGVKGTTQEILLIFNPFSSAVFFLGLALLAKGRKSAIIMLIIDFLMTFVLYANILFYRFFDDFLTFPNIKQSGNVGNMGDGIFSIMAGHDIFYFLDIIILIAVLIWRPELKEYKMKKRFASLVILSGIALFFINLHYAEKDRPQLLTRTFDRNYIVKYLGLYNYTIYDGVQTAQTETQRAYASSDDLTSVENYTTSHYAKPNAEYFGSAKGKNIIKIHLESFQSFLIDYKLNGEEVTPFLNKLAHGGEDVTYFDNFFHQTGQGKTSDAELTMDNSIFGLPEGSAFVTKGENTYQSLPAILDQKEGYTSAVLHGDYKSFWNRDQIYKHIGYDKFFDASTYDMSDENVINMGLKDKPFFTESIPKLESLKQPFYAHLITLTNHYPFNLDEKDASLKKATTGDNTVDSYFQTARYLDEALEQFFKELKEAGLYDNSVIMIYGDHNGISENHNRAMKEILGKEITDYQNAQNQRVPLMIRVPGKKGGVNHTYGGEIDVMPTLLHLEGIDSQKYINFGTDLFSKDHDDTVAFRNGDFVTPKYTSVDNIIYDTKTGEKLKANEETKNLKTRVNQQLSLSDSVLYKDLLRFHKLNDFKAVDPSDYHYGKEKEIK</sequence>
<reference key="1">
    <citation type="journal article" date="1997" name="Microbiology">
        <title>A 23.4 kb segment at the 69 degrees-70 degrees region of the Bacillus subtilis genome.</title>
        <authorList>
            <person name="Yamamoto H."/>
            <person name="Uchiyama S."/>
            <person name="Nugroho F.A."/>
            <person name="Sekiguchi J."/>
        </authorList>
    </citation>
    <scope>NUCLEOTIDE SEQUENCE [GENOMIC DNA]</scope>
    <source>
        <strain>168 / AC327</strain>
    </source>
</reference>
<reference key="2">
    <citation type="journal article" date="1997" name="Nature">
        <title>The complete genome sequence of the Gram-positive bacterium Bacillus subtilis.</title>
        <authorList>
            <person name="Kunst F."/>
            <person name="Ogasawara N."/>
            <person name="Moszer I."/>
            <person name="Albertini A.M."/>
            <person name="Alloni G."/>
            <person name="Azevedo V."/>
            <person name="Bertero M.G."/>
            <person name="Bessieres P."/>
            <person name="Bolotin A."/>
            <person name="Borchert S."/>
            <person name="Borriss R."/>
            <person name="Boursier L."/>
            <person name="Brans A."/>
            <person name="Braun M."/>
            <person name="Brignell S.C."/>
            <person name="Bron S."/>
            <person name="Brouillet S."/>
            <person name="Bruschi C.V."/>
            <person name="Caldwell B."/>
            <person name="Capuano V."/>
            <person name="Carter N.M."/>
            <person name="Choi S.-K."/>
            <person name="Codani J.-J."/>
            <person name="Connerton I.F."/>
            <person name="Cummings N.J."/>
            <person name="Daniel R.A."/>
            <person name="Denizot F."/>
            <person name="Devine K.M."/>
            <person name="Duesterhoeft A."/>
            <person name="Ehrlich S.D."/>
            <person name="Emmerson P.T."/>
            <person name="Entian K.-D."/>
            <person name="Errington J."/>
            <person name="Fabret C."/>
            <person name="Ferrari E."/>
            <person name="Foulger D."/>
            <person name="Fritz C."/>
            <person name="Fujita M."/>
            <person name="Fujita Y."/>
            <person name="Fuma S."/>
            <person name="Galizzi A."/>
            <person name="Galleron N."/>
            <person name="Ghim S.-Y."/>
            <person name="Glaser P."/>
            <person name="Goffeau A."/>
            <person name="Golightly E.J."/>
            <person name="Grandi G."/>
            <person name="Guiseppi G."/>
            <person name="Guy B.J."/>
            <person name="Haga K."/>
            <person name="Haiech J."/>
            <person name="Harwood C.R."/>
            <person name="Henaut A."/>
            <person name="Hilbert H."/>
            <person name="Holsappel S."/>
            <person name="Hosono S."/>
            <person name="Hullo M.-F."/>
            <person name="Itaya M."/>
            <person name="Jones L.-M."/>
            <person name="Joris B."/>
            <person name="Karamata D."/>
            <person name="Kasahara Y."/>
            <person name="Klaerr-Blanchard M."/>
            <person name="Klein C."/>
            <person name="Kobayashi Y."/>
            <person name="Koetter P."/>
            <person name="Koningstein G."/>
            <person name="Krogh S."/>
            <person name="Kumano M."/>
            <person name="Kurita K."/>
            <person name="Lapidus A."/>
            <person name="Lardinois S."/>
            <person name="Lauber J."/>
            <person name="Lazarevic V."/>
            <person name="Lee S.-M."/>
            <person name="Levine A."/>
            <person name="Liu H."/>
            <person name="Masuda S."/>
            <person name="Mauel C."/>
            <person name="Medigue C."/>
            <person name="Medina N."/>
            <person name="Mellado R.P."/>
            <person name="Mizuno M."/>
            <person name="Moestl D."/>
            <person name="Nakai S."/>
            <person name="Noback M."/>
            <person name="Noone D."/>
            <person name="O'Reilly M."/>
            <person name="Ogawa K."/>
            <person name="Ogiwara A."/>
            <person name="Oudega B."/>
            <person name="Park S.-H."/>
            <person name="Parro V."/>
            <person name="Pohl T.M."/>
            <person name="Portetelle D."/>
            <person name="Porwollik S."/>
            <person name="Prescott A.M."/>
            <person name="Presecan E."/>
            <person name="Pujic P."/>
            <person name="Purnelle B."/>
            <person name="Rapoport G."/>
            <person name="Rey M."/>
            <person name="Reynolds S."/>
            <person name="Rieger M."/>
            <person name="Rivolta C."/>
            <person name="Rocha E."/>
            <person name="Roche B."/>
            <person name="Rose M."/>
            <person name="Sadaie Y."/>
            <person name="Sato T."/>
            <person name="Scanlan E."/>
            <person name="Schleich S."/>
            <person name="Schroeter R."/>
            <person name="Scoffone F."/>
            <person name="Sekiguchi J."/>
            <person name="Sekowska A."/>
            <person name="Seror S.J."/>
            <person name="Serror P."/>
            <person name="Shin B.-S."/>
            <person name="Soldo B."/>
            <person name="Sorokin A."/>
            <person name="Tacconi E."/>
            <person name="Takagi T."/>
            <person name="Takahashi H."/>
            <person name="Takemaru K."/>
            <person name="Takeuchi M."/>
            <person name="Tamakoshi A."/>
            <person name="Tanaka T."/>
            <person name="Terpstra P."/>
            <person name="Tognoni A."/>
            <person name="Tosato V."/>
            <person name="Uchiyama S."/>
            <person name="Vandenbol M."/>
            <person name="Vannier F."/>
            <person name="Vassarotti A."/>
            <person name="Viari A."/>
            <person name="Wambutt R."/>
            <person name="Wedler E."/>
            <person name="Wedler H."/>
            <person name="Weitzenegger T."/>
            <person name="Winters P."/>
            <person name="Wipat A."/>
            <person name="Yamamoto H."/>
            <person name="Yamane K."/>
            <person name="Yasumoto K."/>
            <person name="Yata K."/>
            <person name="Yoshida K."/>
            <person name="Yoshikawa H.-F."/>
            <person name="Zumstein E."/>
            <person name="Yoshikawa H."/>
            <person name="Danchin A."/>
        </authorList>
    </citation>
    <scope>NUCLEOTIDE SEQUENCE [LARGE SCALE GENOMIC DNA]</scope>
    <source>
        <strain>168</strain>
    </source>
</reference>
<reference key="3">
    <citation type="journal article" date="2000" name="Microbiology">
        <title>Proteome analysis of Bacillus subtilis extracellular proteins: a two-dimensional protein electrophoretic study.</title>
        <authorList>
            <person name="Hirose I."/>
            <person name="Sano K."/>
            <person name="Shioda I."/>
            <person name="Kumano M."/>
            <person name="Nakamura K."/>
            <person name="Yamane K."/>
        </authorList>
    </citation>
    <scope>PROTEIN SEQUENCE OF 215-229</scope>
    <scope>SUBCELLULAR LOCATION</scope>
    <source>
        <strain>168</strain>
    </source>
</reference>
<reference key="4">
    <citation type="journal article" date="2001" name="Genome Res.">
        <title>A proteomic view on genome-based signal peptide predictions.</title>
        <authorList>
            <person name="Antelmann H."/>
            <person name="Tjalsma H."/>
            <person name="Voigt B."/>
            <person name="Ohlmeier S."/>
            <person name="Bron S."/>
            <person name="van Dijl J.M."/>
            <person name="Hecker M."/>
        </authorList>
    </citation>
    <scope>PARTIAL PROTEIN SEQUENCE</scope>
    <scope>IDENTIFICATION BY MASS SPECTROMETRY</scope>
    <scope>PROCESSING BY SIPT/SIPV</scope>
    <source>
        <strain>168</strain>
    </source>
</reference>
<reference key="5">
    <citation type="journal article" date="2007" name="J. Bacteriol.">
        <title>SigM-responsive genes of Bacillus subtilis and their promoters.</title>
        <authorList>
            <person name="Jervis A.J."/>
            <person name="Thackray P.D."/>
            <person name="Houston C.W."/>
            <person name="Horsburgh M.J."/>
            <person name="Moir A."/>
        </authorList>
    </citation>
    <scope>INDUCTION</scope>
    <source>
        <strain>168 / 1604</strain>
    </source>
</reference>
<reference key="6">
    <citation type="journal article" date="2007" name="Proc. Natl. Acad. Sci. U.S.A.">
        <title>Synthesis of glycerol phosphate lipoteichoic acid in Staphylococcus aureus.</title>
        <authorList>
            <person name="Gruendling A."/>
            <person name="Schneewind O."/>
        </authorList>
    </citation>
    <scope>FUNCTION IN LTA BIOSYNTHESIS</scope>
    <source>
        <strain>168</strain>
    </source>
</reference>
<name>LTAS1_BACSU</name>
<dbReference type="EC" id="2.7.8.-"/>
<dbReference type="EMBL" id="D86418">
    <property type="protein sequence ID" value="BAA20118.1"/>
    <property type="status" value="ALT_INIT"/>
    <property type="molecule type" value="Genomic_DNA"/>
</dbReference>
<dbReference type="EMBL" id="AL009126">
    <property type="protein sequence ID" value="CAB12545.2"/>
    <property type="molecule type" value="Genomic_DNA"/>
</dbReference>
<dbReference type="PIR" id="D69815">
    <property type="entry name" value="D69815"/>
</dbReference>
<dbReference type="RefSeq" id="WP_003243930.1">
    <property type="nucleotide sequence ID" value="NZ_OZ025638.1"/>
</dbReference>
<dbReference type="SMR" id="Q797B3"/>
<dbReference type="FunCoup" id="Q797B3">
    <property type="interactions" value="137"/>
</dbReference>
<dbReference type="STRING" id="224308.BSU07260"/>
<dbReference type="PaxDb" id="224308-BSU07260"/>
<dbReference type="EnsemblBacteria" id="CAB12545">
    <property type="protein sequence ID" value="CAB12545"/>
    <property type="gene ID" value="BSU_07260"/>
</dbReference>
<dbReference type="GeneID" id="936099"/>
<dbReference type="KEGG" id="bsu:BSU07260"/>
<dbReference type="PATRIC" id="fig|224308.179.peg.788"/>
<dbReference type="eggNOG" id="COG1368">
    <property type="taxonomic scope" value="Bacteria"/>
</dbReference>
<dbReference type="InParanoid" id="Q797B3"/>
<dbReference type="OrthoDB" id="5901192at2"/>
<dbReference type="PhylomeDB" id="Q797B3"/>
<dbReference type="BioCyc" id="BSUB:BSU07260-MONOMER"/>
<dbReference type="UniPathway" id="UPA00556"/>
<dbReference type="Proteomes" id="UP000001570">
    <property type="component" value="Chromosome"/>
</dbReference>
<dbReference type="GO" id="GO:0005576">
    <property type="term" value="C:extracellular region"/>
    <property type="evidence" value="ECO:0007669"/>
    <property type="project" value="UniProtKB-SubCell"/>
</dbReference>
<dbReference type="GO" id="GO:0016020">
    <property type="term" value="C:membrane"/>
    <property type="evidence" value="ECO:0000318"/>
    <property type="project" value="GO_Central"/>
</dbReference>
<dbReference type="GO" id="GO:0005886">
    <property type="term" value="C:plasma membrane"/>
    <property type="evidence" value="ECO:0007669"/>
    <property type="project" value="UniProtKB-SubCell"/>
</dbReference>
<dbReference type="GO" id="GO:0046872">
    <property type="term" value="F:metal ion binding"/>
    <property type="evidence" value="ECO:0007669"/>
    <property type="project" value="UniProtKB-KW"/>
</dbReference>
<dbReference type="GO" id="GO:0016740">
    <property type="term" value="F:transferase activity"/>
    <property type="evidence" value="ECO:0000318"/>
    <property type="project" value="GO_Central"/>
</dbReference>
<dbReference type="GO" id="GO:0071555">
    <property type="term" value="P:cell wall organization"/>
    <property type="evidence" value="ECO:0007669"/>
    <property type="project" value="UniProtKB-KW"/>
</dbReference>
<dbReference type="GO" id="GO:0070395">
    <property type="term" value="P:lipoteichoic acid biosynthetic process"/>
    <property type="evidence" value="ECO:0007669"/>
    <property type="project" value="UniProtKB-UniPathway"/>
</dbReference>
<dbReference type="CDD" id="cd16015">
    <property type="entry name" value="LTA_synthase"/>
    <property type="match status" value="1"/>
</dbReference>
<dbReference type="Gene3D" id="3.30.1120.170">
    <property type="match status" value="1"/>
</dbReference>
<dbReference type="Gene3D" id="3.40.720.10">
    <property type="entry name" value="Alkaline Phosphatase, subunit A"/>
    <property type="match status" value="1"/>
</dbReference>
<dbReference type="InterPro" id="IPR017850">
    <property type="entry name" value="Alkaline_phosphatase_core_sf"/>
</dbReference>
<dbReference type="InterPro" id="IPR012160">
    <property type="entry name" value="LtaS-like"/>
</dbReference>
<dbReference type="InterPro" id="IPR050448">
    <property type="entry name" value="OpgB/LTA_synthase_biosynth"/>
</dbReference>
<dbReference type="InterPro" id="IPR000917">
    <property type="entry name" value="Sulfatase_N"/>
</dbReference>
<dbReference type="PANTHER" id="PTHR47371">
    <property type="entry name" value="LIPOTEICHOIC ACID SYNTHASE"/>
    <property type="match status" value="1"/>
</dbReference>
<dbReference type="PANTHER" id="PTHR47371:SF3">
    <property type="entry name" value="PHOSPHOGLYCEROL TRANSFERASE I"/>
    <property type="match status" value="1"/>
</dbReference>
<dbReference type="Pfam" id="PF00884">
    <property type="entry name" value="Sulfatase"/>
    <property type="match status" value="1"/>
</dbReference>
<dbReference type="PIRSF" id="PIRSF005091">
    <property type="entry name" value="Mmb_sulf_HI1246"/>
    <property type="match status" value="1"/>
</dbReference>
<dbReference type="SUPFAM" id="SSF53649">
    <property type="entry name" value="Alkaline phosphatase-like"/>
    <property type="match status" value="1"/>
</dbReference>
<proteinExistence type="evidence at protein level"/>
<organism>
    <name type="scientific">Bacillus subtilis (strain 168)</name>
    <dbReference type="NCBI Taxonomy" id="224308"/>
    <lineage>
        <taxon>Bacteria</taxon>
        <taxon>Bacillati</taxon>
        <taxon>Bacillota</taxon>
        <taxon>Bacilli</taxon>
        <taxon>Bacillales</taxon>
        <taxon>Bacillaceae</taxon>
        <taxon>Bacillus</taxon>
    </lineage>
</organism>
<evidence type="ECO:0000250" key="1"/>
<evidence type="ECO:0000255" key="2"/>
<evidence type="ECO:0000269" key="3">
    <source>
    </source>
</evidence>
<evidence type="ECO:0000269" key="4">
    <source>
    </source>
</evidence>
<evidence type="ECO:0000305" key="5"/>
<protein>
    <recommendedName>
        <fullName>Lipoteichoic acid synthase 1</fullName>
    </recommendedName>
    <component>
        <recommendedName>
            <fullName>Glycerol phosphate lipoteichoic acid synthase 1</fullName>
            <shortName>LTA synthase 1</shortName>
            <ecNumber>2.7.8.-</ecNumber>
        </recommendedName>
        <alternativeName>
            <fullName>Polyglycerol phosphate synthase 1</fullName>
        </alternativeName>
    </component>
    <component>
        <recommendedName>
            <fullName>Processed glycerol phosphate lipoteichoic acid synthase 1</fullName>
        </recommendedName>
    </component>
</protein>
<gene>
    <name type="primary">ltaS1</name>
    <name type="synonym">yfnI</name>
    <name type="ordered locus">BSU07260</name>
</gene>
<feature type="chain" id="PRO_0000305346" description="Glycerol phosphate lipoteichoic acid synthase 1">
    <location>
        <begin position="1"/>
        <end position="214"/>
    </location>
</feature>
<feature type="chain" id="PRO_0000305347" description="Processed glycerol phosphate lipoteichoic acid synthase 1">
    <location>
        <begin position="215"/>
        <end position="639"/>
    </location>
</feature>
<feature type="topological domain" description="Cytoplasmic" evidence="2">
    <location>
        <begin position="1"/>
        <end position="3"/>
    </location>
</feature>
<feature type="transmembrane region" description="Helical" evidence="2">
    <location>
        <begin position="4"/>
        <end position="24"/>
    </location>
</feature>
<feature type="topological domain" description="Extracellular" evidence="2">
    <location>
        <begin position="25"/>
        <end position="41"/>
    </location>
</feature>
<feature type="transmembrane region" description="Helical" evidence="2">
    <location>
        <begin position="42"/>
        <end position="62"/>
    </location>
</feature>
<feature type="topological domain" description="Cytoplasmic" evidence="2">
    <location>
        <begin position="63"/>
        <end position="67"/>
    </location>
</feature>
<feature type="transmembrane region" description="Helical" evidence="2">
    <location>
        <begin position="68"/>
        <end position="88"/>
    </location>
</feature>
<feature type="topological domain" description="Extracellular" evidence="2">
    <location>
        <begin position="89"/>
        <end position="116"/>
    </location>
</feature>
<feature type="transmembrane region" description="Helical" evidence="2">
    <location>
        <begin position="117"/>
        <end position="137"/>
    </location>
</feature>
<feature type="topological domain" description="Cytoplasmic" evidence="2">
    <location>
        <begin position="138"/>
        <end position="150"/>
    </location>
</feature>
<feature type="transmembrane region" description="Helical" evidence="2">
    <location>
        <begin position="151"/>
        <end position="171"/>
    </location>
</feature>
<feature type="topological domain" description="Extracellular" evidence="2">
    <location>
        <begin position="172"/>
        <end position="639"/>
    </location>
</feature>
<feature type="active site" evidence="1">
    <location>
        <position position="297"/>
    </location>
</feature>
<feature type="binding site" evidence="1">
    <location>
        <position position="252"/>
    </location>
    <ligand>
        <name>Mn(2+)</name>
        <dbReference type="ChEBI" id="CHEBI:29035"/>
    </ligand>
</feature>
<feature type="binding site" evidence="1">
    <location>
        <position position="297"/>
    </location>
    <ligand>
        <name>Mn(2+)</name>
        <dbReference type="ChEBI" id="CHEBI:29035"/>
    </ligand>
</feature>
<feature type="binding site" evidence="1">
    <location>
        <position position="413"/>
    </location>
    <ligand>
        <name>substrate</name>
    </ligand>
</feature>
<feature type="binding site" evidence="1">
    <location>
        <position position="472"/>
    </location>
    <ligand>
        <name>Mn(2+)</name>
        <dbReference type="ChEBI" id="CHEBI:29035"/>
    </ligand>
</feature>
<feature type="binding site" evidence="1">
    <location>
        <position position="473"/>
    </location>
    <ligand>
        <name>Mn(2+)</name>
        <dbReference type="ChEBI" id="CHEBI:29035"/>
    </ligand>
</feature>
<feature type="site" description="Cleavage; by SipT/SipV">
    <location>
        <begin position="214"/>
        <end position="215"/>
    </location>
</feature>
<accession>Q797B3</accession>
<accession>O06487</accession>
<keyword id="KW-1003">Cell membrane</keyword>
<keyword id="KW-0961">Cell wall biogenesis/degradation</keyword>
<keyword id="KW-0903">Direct protein sequencing</keyword>
<keyword id="KW-0464">Manganese</keyword>
<keyword id="KW-0472">Membrane</keyword>
<keyword id="KW-0479">Metal-binding</keyword>
<keyword id="KW-1185">Reference proteome</keyword>
<keyword id="KW-0964">Secreted</keyword>
<keyword id="KW-0808">Transferase</keyword>
<keyword id="KW-0812">Transmembrane</keyword>
<keyword id="KW-1133">Transmembrane helix</keyword>
<comment type="function">
    <text evidence="4">Catalyzes the polymerization of lipoteichoic acid (LTA) polyglycerol phosphate, a reaction that presumably uses phosphatidylglycerol (PG) as substrate.</text>
</comment>
<comment type="pathway">
    <text>Cell wall biogenesis; lipoteichoic acid biosynthesis.</text>
</comment>
<comment type="subcellular location">
    <subcellularLocation>
        <location evidence="5">Cell membrane</location>
        <topology evidence="5">Multi-pass membrane protein</topology>
    </subcellularLocation>
</comment>
<comment type="subcellular location">
    <molecule>Processed glycerol phosphate lipoteichoic acid synthase 1</molecule>
    <subcellularLocation>
        <location>Secreted</location>
    </subcellularLocation>
    <text>The secretion into the extracellular medium is dependent on SecA and Ffh.</text>
</comment>
<comment type="induction">
    <text evidence="3">Transcribed under partial control of SigM ECF sigma factor (PubMed:17434969).</text>
</comment>
<comment type="PTM">
    <text>Proteolytically cleaved by the type I signal peptidases SipT and SipV.</text>
</comment>
<comment type="miscellaneous">
    <text>Could not restore staphylococcal growth after ltaS depletion.</text>
</comment>
<comment type="similarity">
    <text evidence="5">Belongs to the LTA synthase family.</text>
</comment>
<comment type="sequence caution" evidence="5">
    <conflict type="erroneous initiation">
        <sequence resource="EMBL-CDS" id="BAA20118"/>
    </conflict>
    <text>Extended N-terminus.</text>
</comment>